<evidence type="ECO:0000255" key="1">
    <source>
        <dbReference type="HAMAP-Rule" id="MF_00385"/>
    </source>
</evidence>
<evidence type="ECO:0000305" key="2"/>
<dbReference type="EMBL" id="CP000521">
    <property type="protein sequence ID" value="ABO13561.2"/>
    <property type="status" value="ALT_INIT"/>
    <property type="molecule type" value="Genomic_DNA"/>
</dbReference>
<dbReference type="RefSeq" id="WP_000260334.1">
    <property type="nucleotide sequence ID" value="NZ_CP053098.1"/>
</dbReference>
<dbReference type="SMR" id="A3M9G7"/>
<dbReference type="GeneID" id="9380727"/>
<dbReference type="KEGG" id="acb:A1S_3164"/>
<dbReference type="HOGENOM" id="CLU_100590_5_1_6"/>
<dbReference type="GO" id="GO:0005737">
    <property type="term" value="C:cytoplasm"/>
    <property type="evidence" value="ECO:0007669"/>
    <property type="project" value="UniProtKB-ARBA"/>
</dbReference>
<dbReference type="GO" id="GO:0015935">
    <property type="term" value="C:small ribosomal subunit"/>
    <property type="evidence" value="ECO:0007669"/>
    <property type="project" value="TreeGrafter"/>
</dbReference>
<dbReference type="GO" id="GO:0003735">
    <property type="term" value="F:structural constituent of ribosome"/>
    <property type="evidence" value="ECO:0007669"/>
    <property type="project" value="InterPro"/>
</dbReference>
<dbReference type="GO" id="GO:0006412">
    <property type="term" value="P:translation"/>
    <property type="evidence" value="ECO:0007669"/>
    <property type="project" value="UniProtKB-UniRule"/>
</dbReference>
<dbReference type="FunFam" id="3.30.1320.10:FF:000001">
    <property type="entry name" value="30S ribosomal protein S16"/>
    <property type="match status" value="1"/>
</dbReference>
<dbReference type="Gene3D" id="3.30.1320.10">
    <property type="match status" value="1"/>
</dbReference>
<dbReference type="HAMAP" id="MF_00385">
    <property type="entry name" value="Ribosomal_bS16"/>
    <property type="match status" value="1"/>
</dbReference>
<dbReference type="InterPro" id="IPR000307">
    <property type="entry name" value="Ribosomal_bS16"/>
</dbReference>
<dbReference type="InterPro" id="IPR020592">
    <property type="entry name" value="Ribosomal_bS16_CS"/>
</dbReference>
<dbReference type="InterPro" id="IPR023803">
    <property type="entry name" value="Ribosomal_bS16_dom_sf"/>
</dbReference>
<dbReference type="NCBIfam" id="TIGR00002">
    <property type="entry name" value="S16"/>
    <property type="match status" value="1"/>
</dbReference>
<dbReference type="PANTHER" id="PTHR12919">
    <property type="entry name" value="30S RIBOSOMAL PROTEIN S16"/>
    <property type="match status" value="1"/>
</dbReference>
<dbReference type="PANTHER" id="PTHR12919:SF20">
    <property type="entry name" value="SMALL RIBOSOMAL SUBUNIT PROTEIN BS16M"/>
    <property type="match status" value="1"/>
</dbReference>
<dbReference type="Pfam" id="PF00886">
    <property type="entry name" value="Ribosomal_S16"/>
    <property type="match status" value="1"/>
</dbReference>
<dbReference type="SUPFAM" id="SSF54565">
    <property type="entry name" value="Ribosomal protein S16"/>
    <property type="match status" value="1"/>
</dbReference>
<dbReference type="PROSITE" id="PS00732">
    <property type="entry name" value="RIBOSOMAL_S16"/>
    <property type="match status" value="1"/>
</dbReference>
<accession>A3M9G7</accession>
<organism>
    <name type="scientific">Acinetobacter baumannii (strain ATCC 17978 / DSM 105126 / CIP 53.77 / LMG 1025 / NCDC KC755 / 5377)</name>
    <dbReference type="NCBI Taxonomy" id="400667"/>
    <lineage>
        <taxon>Bacteria</taxon>
        <taxon>Pseudomonadati</taxon>
        <taxon>Pseudomonadota</taxon>
        <taxon>Gammaproteobacteria</taxon>
        <taxon>Moraxellales</taxon>
        <taxon>Moraxellaceae</taxon>
        <taxon>Acinetobacter</taxon>
        <taxon>Acinetobacter calcoaceticus/baumannii complex</taxon>
    </lineage>
</organism>
<sequence>MVVIRLARGGAKKRPFYQIVVTDSRNARDGRFIERIGFFNPTAQGQAEKLRLDADRFAHWVSQGAQPSERVASLAAQAKKATA</sequence>
<name>RS16_ACIBT</name>
<comment type="similarity">
    <text evidence="1">Belongs to the bacterial ribosomal protein bS16 family.</text>
</comment>
<comment type="sequence caution" evidence="2">
    <conflict type="erroneous initiation">
        <sequence resource="EMBL-CDS" id="ABO13561"/>
    </conflict>
</comment>
<keyword id="KW-0687">Ribonucleoprotein</keyword>
<keyword id="KW-0689">Ribosomal protein</keyword>
<protein>
    <recommendedName>
        <fullName evidence="1">Small ribosomal subunit protein bS16</fullName>
    </recommendedName>
    <alternativeName>
        <fullName evidence="2">30S ribosomal protein S16</fullName>
    </alternativeName>
</protein>
<proteinExistence type="inferred from homology"/>
<feature type="chain" id="PRO_1000049202" description="Small ribosomal subunit protein bS16">
    <location>
        <begin position="1"/>
        <end position="83"/>
    </location>
</feature>
<gene>
    <name evidence="1" type="primary">rpsP</name>
    <name type="ordered locus">A1S_3164</name>
</gene>
<reference key="1">
    <citation type="journal article" date="2007" name="Genes Dev.">
        <title>New insights into Acinetobacter baumannii pathogenesis revealed by high-density pyrosequencing and transposon mutagenesis.</title>
        <authorList>
            <person name="Smith M.G."/>
            <person name="Gianoulis T.A."/>
            <person name="Pukatzki S."/>
            <person name="Mekalanos J.J."/>
            <person name="Ornston L.N."/>
            <person name="Gerstein M."/>
            <person name="Snyder M."/>
        </authorList>
    </citation>
    <scope>NUCLEOTIDE SEQUENCE [LARGE SCALE GENOMIC DNA]</scope>
    <source>
        <strain>ATCC 17978 / DSM 105126 / CIP 53.77 / LMG 1025 / NCDC KC755 / 5377</strain>
    </source>
</reference>